<name>YOZL_BACSU</name>
<accession>O31842</accession>
<proteinExistence type="predicted"/>
<feature type="chain" id="PRO_0000389547" description="Uncharacterized protein YozL">
    <location>
        <begin position="1"/>
        <end position="97"/>
    </location>
</feature>
<dbReference type="EMBL" id="AL009126">
    <property type="protein sequence ID" value="CAB13787.1"/>
    <property type="molecule type" value="Genomic_DNA"/>
</dbReference>
<dbReference type="PIR" id="H69931">
    <property type="entry name" value="H69931"/>
</dbReference>
<dbReference type="RefSeq" id="NP_389776.1">
    <property type="nucleotide sequence ID" value="NC_000964.3"/>
</dbReference>
<dbReference type="RefSeq" id="WP_003231333.1">
    <property type="nucleotide sequence ID" value="NZ_OZ025638.1"/>
</dbReference>
<dbReference type="SMR" id="O31842"/>
<dbReference type="FunCoup" id="O31842">
    <property type="interactions" value="33"/>
</dbReference>
<dbReference type="STRING" id="224308.BSU18950"/>
<dbReference type="PaxDb" id="224308-BSU18950"/>
<dbReference type="EnsemblBacteria" id="CAB13787">
    <property type="protein sequence ID" value="CAB13787"/>
    <property type="gene ID" value="BSU_18950"/>
</dbReference>
<dbReference type="GeneID" id="939619"/>
<dbReference type="KEGG" id="bsu:BSU18950"/>
<dbReference type="PATRIC" id="fig|224308.179.peg.2072"/>
<dbReference type="InParanoid" id="O31842"/>
<dbReference type="OrthoDB" id="9891352at2"/>
<dbReference type="BioCyc" id="BSUB:BSU18950-MONOMER"/>
<dbReference type="Proteomes" id="UP000001570">
    <property type="component" value="Chromosome"/>
</dbReference>
<dbReference type="InterPro" id="IPR014962">
    <property type="entry name" value="YolD"/>
</dbReference>
<dbReference type="PANTHER" id="PTHR40051">
    <property type="entry name" value="IG HYPOTHETICAL 15966"/>
    <property type="match status" value="1"/>
</dbReference>
<dbReference type="PANTHER" id="PTHR40051:SF1">
    <property type="entry name" value="YOLD-LIKE FAMILY PROTEIN"/>
    <property type="match status" value="1"/>
</dbReference>
<dbReference type="Pfam" id="PF08863">
    <property type="entry name" value="YolD"/>
    <property type="match status" value="1"/>
</dbReference>
<protein>
    <recommendedName>
        <fullName>Uncharacterized protein YozL</fullName>
    </recommendedName>
</protein>
<organism>
    <name type="scientific">Bacillus subtilis (strain 168)</name>
    <dbReference type="NCBI Taxonomy" id="224308"/>
    <lineage>
        <taxon>Bacteria</taxon>
        <taxon>Bacillati</taxon>
        <taxon>Bacillota</taxon>
        <taxon>Bacilli</taxon>
        <taxon>Bacillales</taxon>
        <taxon>Bacillaceae</taxon>
        <taxon>Bacillus</taxon>
    </lineage>
</organism>
<sequence>MMLEQLIQLKQDLIDGSKVEKPSLDDKQIDEMDILVSEALEFNKELKFKLFNKGFVENVTGRVHYINFEQQKLHVKDQNDNTVYINMNNIIRVIYND</sequence>
<gene>
    <name type="primary">yozL</name>
    <name type="ordered locus">BSU18950</name>
</gene>
<keyword id="KW-1185">Reference proteome</keyword>
<reference key="1">
    <citation type="journal article" date="1997" name="Nature">
        <title>The complete genome sequence of the Gram-positive bacterium Bacillus subtilis.</title>
        <authorList>
            <person name="Kunst F."/>
            <person name="Ogasawara N."/>
            <person name="Moszer I."/>
            <person name="Albertini A.M."/>
            <person name="Alloni G."/>
            <person name="Azevedo V."/>
            <person name="Bertero M.G."/>
            <person name="Bessieres P."/>
            <person name="Bolotin A."/>
            <person name="Borchert S."/>
            <person name="Borriss R."/>
            <person name="Boursier L."/>
            <person name="Brans A."/>
            <person name="Braun M."/>
            <person name="Brignell S.C."/>
            <person name="Bron S."/>
            <person name="Brouillet S."/>
            <person name="Bruschi C.V."/>
            <person name="Caldwell B."/>
            <person name="Capuano V."/>
            <person name="Carter N.M."/>
            <person name="Choi S.-K."/>
            <person name="Codani J.-J."/>
            <person name="Connerton I.F."/>
            <person name="Cummings N.J."/>
            <person name="Daniel R.A."/>
            <person name="Denizot F."/>
            <person name="Devine K.M."/>
            <person name="Duesterhoeft A."/>
            <person name="Ehrlich S.D."/>
            <person name="Emmerson P.T."/>
            <person name="Entian K.-D."/>
            <person name="Errington J."/>
            <person name="Fabret C."/>
            <person name="Ferrari E."/>
            <person name="Foulger D."/>
            <person name="Fritz C."/>
            <person name="Fujita M."/>
            <person name="Fujita Y."/>
            <person name="Fuma S."/>
            <person name="Galizzi A."/>
            <person name="Galleron N."/>
            <person name="Ghim S.-Y."/>
            <person name="Glaser P."/>
            <person name="Goffeau A."/>
            <person name="Golightly E.J."/>
            <person name="Grandi G."/>
            <person name="Guiseppi G."/>
            <person name="Guy B.J."/>
            <person name="Haga K."/>
            <person name="Haiech J."/>
            <person name="Harwood C.R."/>
            <person name="Henaut A."/>
            <person name="Hilbert H."/>
            <person name="Holsappel S."/>
            <person name="Hosono S."/>
            <person name="Hullo M.-F."/>
            <person name="Itaya M."/>
            <person name="Jones L.-M."/>
            <person name="Joris B."/>
            <person name="Karamata D."/>
            <person name="Kasahara Y."/>
            <person name="Klaerr-Blanchard M."/>
            <person name="Klein C."/>
            <person name="Kobayashi Y."/>
            <person name="Koetter P."/>
            <person name="Koningstein G."/>
            <person name="Krogh S."/>
            <person name="Kumano M."/>
            <person name="Kurita K."/>
            <person name="Lapidus A."/>
            <person name="Lardinois S."/>
            <person name="Lauber J."/>
            <person name="Lazarevic V."/>
            <person name="Lee S.-M."/>
            <person name="Levine A."/>
            <person name="Liu H."/>
            <person name="Masuda S."/>
            <person name="Mauel C."/>
            <person name="Medigue C."/>
            <person name="Medina N."/>
            <person name="Mellado R.P."/>
            <person name="Mizuno M."/>
            <person name="Moestl D."/>
            <person name="Nakai S."/>
            <person name="Noback M."/>
            <person name="Noone D."/>
            <person name="O'Reilly M."/>
            <person name="Ogawa K."/>
            <person name="Ogiwara A."/>
            <person name="Oudega B."/>
            <person name="Park S.-H."/>
            <person name="Parro V."/>
            <person name="Pohl T.M."/>
            <person name="Portetelle D."/>
            <person name="Porwollik S."/>
            <person name="Prescott A.M."/>
            <person name="Presecan E."/>
            <person name="Pujic P."/>
            <person name="Purnelle B."/>
            <person name="Rapoport G."/>
            <person name="Rey M."/>
            <person name="Reynolds S."/>
            <person name="Rieger M."/>
            <person name="Rivolta C."/>
            <person name="Rocha E."/>
            <person name="Roche B."/>
            <person name="Rose M."/>
            <person name="Sadaie Y."/>
            <person name="Sato T."/>
            <person name="Scanlan E."/>
            <person name="Schleich S."/>
            <person name="Schroeter R."/>
            <person name="Scoffone F."/>
            <person name="Sekiguchi J."/>
            <person name="Sekowska A."/>
            <person name="Seror S.J."/>
            <person name="Serror P."/>
            <person name="Shin B.-S."/>
            <person name="Soldo B."/>
            <person name="Sorokin A."/>
            <person name="Tacconi E."/>
            <person name="Takagi T."/>
            <person name="Takahashi H."/>
            <person name="Takemaru K."/>
            <person name="Takeuchi M."/>
            <person name="Tamakoshi A."/>
            <person name="Tanaka T."/>
            <person name="Terpstra P."/>
            <person name="Tognoni A."/>
            <person name="Tosato V."/>
            <person name="Uchiyama S."/>
            <person name="Vandenbol M."/>
            <person name="Vannier F."/>
            <person name="Vassarotti A."/>
            <person name="Viari A."/>
            <person name="Wambutt R."/>
            <person name="Wedler E."/>
            <person name="Wedler H."/>
            <person name="Weitzenegger T."/>
            <person name="Winters P."/>
            <person name="Wipat A."/>
            <person name="Yamamoto H."/>
            <person name="Yamane K."/>
            <person name="Yasumoto K."/>
            <person name="Yata K."/>
            <person name="Yoshida K."/>
            <person name="Yoshikawa H.-F."/>
            <person name="Zumstein E."/>
            <person name="Yoshikawa H."/>
            <person name="Danchin A."/>
        </authorList>
    </citation>
    <scope>NUCLEOTIDE SEQUENCE [LARGE SCALE GENOMIC DNA]</scope>
    <source>
        <strain>168</strain>
    </source>
</reference>